<evidence type="ECO:0000255" key="1">
    <source>
        <dbReference type="HAMAP-Rule" id="MF_01315"/>
    </source>
</evidence>
<evidence type="ECO:0000256" key="2">
    <source>
        <dbReference type="SAM" id="MobiDB-lite"/>
    </source>
</evidence>
<evidence type="ECO:0000305" key="3"/>
<reference key="1">
    <citation type="submission" date="2006-12" db="EMBL/GenBank/DDBJ databases">
        <authorList>
            <person name="Hendrix L."/>
            <person name="Mohamoud Y."/>
            <person name="Radune D."/>
            <person name="Shvartsbeyn A."/>
            <person name="Daugherty S."/>
            <person name="Dodson R."/>
            <person name="Durkin A.S."/>
            <person name="Harkins D."/>
            <person name="Huot H."/>
            <person name="Kothari S.P."/>
            <person name="Madupu R."/>
            <person name="Li J."/>
            <person name="Nelson W.C."/>
            <person name="Shrivastava S."/>
            <person name="Giglio M.G."/>
            <person name="Haft D."/>
            <person name="Selengut J."/>
            <person name="Fraser-Ligget C."/>
            <person name="Seshadri R."/>
        </authorList>
    </citation>
    <scope>NUCLEOTIDE SEQUENCE [LARGE SCALE GENOMIC DNA]</scope>
    <source>
        <strain>ATCC 35685 / KC583 / Herrer 020/F12,63</strain>
    </source>
</reference>
<sequence length="122" mass="13958">MARIAGVNIPTNKRLVIALQYIHGIGEKFAHKIIEKVGIPAERRVHELSDSEILQIRETIDRDYQVEGDLRREVAMSVKRLMDLGCYRGLRHRRSLPVRGQRTHTNARTRKGPARAIAGKKK</sequence>
<protein>
    <recommendedName>
        <fullName evidence="1">Small ribosomal subunit protein uS13</fullName>
    </recommendedName>
    <alternativeName>
        <fullName evidence="3">30S ribosomal protein S13</fullName>
    </alternativeName>
</protein>
<name>RS13_BARBK</name>
<accession>A1USR6</accession>
<organism>
    <name type="scientific">Bartonella bacilliformis (strain ATCC 35685 / KC583 / Herrer 020/F12,63)</name>
    <dbReference type="NCBI Taxonomy" id="360095"/>
    <lineage>
        <taxon>Bacteria</taxon>
        <taxon>Pseudomonadati</taxon>
        <taxon>Pseudomonadota</taxon>
        <taxon>Alphaproteobacteria</taxon>
        <taxon>Hyphomicrobiales</taxon>
        <taxon>Bartonellaceae</taxon>
        <taxon>Bartonella</taxon>
    </lineage>
</organism>
<keyword id="KW-0687">Ribonucleoprotein</keyword>
<keyword id="KW-0689">Ribosomal protein</keyword>
<keyword id="KW-0694">RNA-binding</keyword>
<keyword id="KW-0699">rRNA-binding</keyword>
<keyword id="KW-0820">tRNA-binding</keyword>
<feature type="chain" id="PRO_0000306566" description="Small ribosomal subunit protein uS13">
    <location>
        <begin position="1"/>
        <end position="122"/>
    </location>
</feature>
<feature type="region of interest" description="Disordered" evidence="2">
    <location>
        <begin position="97"/>
        <end position="122"/>
    </location>
</feature>
<gene>
    <name evidence="1" type="primary">rpsM</name>
    <name type="ordered locus">BARBAKC583_0720</name>
</gene>
<proteinExistence type="inferred from homology"/>
<dbReference type="EMBL" id="CP000524">
    <property type="protein sequence ID" value="ABM45688.1"/>
    <property type="molecule type" value="Genomic_DNA"/>
</dbReference>
<dbReference type="RefSeq" id="WP_005766959.1">
    <property type="nucleotide sequence ID" value="NC_008783.1"/>
</dbReference>
<dbReference type="SMR" id="A1USR6"/>
<dbReference type="STRING" id="360095.BARBAKC583_0720"/>
<dbReference type="GeneID" id="4685133"/>
<dbReference type="KEGG" id="bbk:BARBAKC583_0720"/>
<dbReference type="PATRIC" id="fig|360095.6.peg.699"/>
<dbReference type="eggNOG" id="COG0099">
    <property type="taxonomic scope" value="Bacteria"/>
</dbReference>
<dbReference type="HOGENOM" id="CLU_103849_1_2_5"/>
<dbReference type="OrthoDB" id="9803610at2"/>
<dbReference type="Proteomes" id="UP000000643">
    <property type="component" value="Chromosome"/>
</dbReference>
<dbReference type="GO" id="GO:0005829">
    <property type="term" value="C:cytosol"/>
    <property type="evidence" value="ECO:0007669"/>
    <property type="project" value="TreeGrafter"/>
</dbReference>
<dbReference type="GO" id="GO:0015935">
    <property type="term" value="C:small ribosomal subunit"/>
    <property type="evidence" value="ECO:0007669"/>
    <property type="project" value="TreeGrafter"/>
</dbReference>
<dbReference type="GO" id="GO:0019843">
    <property type="term" value="F:rRNA binding"/>
    <property type="evidence" value="ECO:0007669"/>
    <property type="project" value="UniProtKB-UniRule"/>
</dbReference>
<dbReference type="GO" id="GO:0003735">
    <property type="term" value="F:structural constituent of ribosome"/>
    <property type="evidence" value="ECO:0007669"/>
    <property type="project" value="InterPro"/>
</dbReference>
<dbReference type="GO" id="GO:0000049">
    <property type="term" value="F:tRNA binding"/>
    <property type="evidence" value="ECO:0007669"/>
    <property type="project" value="UniProtKB-UniRule"/>
</dbReference>
<dbReference type="GO" id="GO:0006412">
    <property type="term" value="P:translation"/>
    <property type="evidence" value="ECO:0007669"/>
    <property type="project" value="UniProtKB-UniRule"/>
</dbReference>
<dbReference type="FunFam" id="1.10.8.50:FF:000001">
    <property type="entry name" value="30S ribosomal protein S13"/>
    <property type="match status" value="1"/>
</dbReference>
<dbReference type="FunFam" id="4.10.910.10:FF:000001">
    <property type="entry name" value="30S ribosomal protein S13"/>
    <property type="match status" value="1"/>
</dbReference>
<dbReference type="Gene3D" id="1.10.8.50">
    <property type="match status" value="1"/>
</dbReference>
<dbReference type="Gene3D" id="4.10.910.10">
    <property type="entry name" value="30s ribosomal protein s13, domain 2"/>
    <property type="match status" value="1"/>
</dbReference>
<dbReference type="HAMAP" id="MF_01315">
    <property type="entry name" value="Ribosomal_uS13"/>
    <property type="match status" value="1"/>
</dbReference>
<dbReference type="InterPro" id="IPR027437">
    <property type="entry name" value="Rbsml_uS13_C"/>
</dbReference>
<dbReference type="InterPro" id="IPR001892">
    <property type="entry name" value="Ribosomal_uS13"/>
</dbReference>
<dbReference type="InterPro" id="IPR010979">
    <property type="entry name" value="Ribosomal_uS13-like_H2TH"/>
</dbReference>
<dbReference type="InterPro" id="IPR019980">
    <property type="entry name" value="Ribosomal_uS13_bac-type"/>
</dbReference>
<dbReference type="InterPro" id="IPR018269">
    <property type="entry name" value="Ribosomal_uS13_CS"/>
</dbReference>
<dbReference type="NCBIfam" id="TIGR03631">
    <property type="entry name" value="uS13_bact"/>
    <property type="match status" value="1"/>
</dbReference>
<dbReference type="PANTHER" id="PTHR10871">
    <property type="entry name" value="30S RIBOSOMAL PROTEIN S13/40S RIBOSOMAL PROTEIN S18"/>
    <property type="match status" value="1"/>
</dbReference>
<dbReference type="PANTHER" id="PTHR10871:SF1">
    <property type="entry name" value="SMALL RIBOSOMAL SUBUNIT PROTEIN US13M"/>
    <property type="match status" value="1"/>
</dbReference>
<dbReference type="Pfam" id="PF00416">
    <property type="entry name" value="Ribosomal_S13"/>
    <property type="match status" value="1"/>
</dbReference>
<dbReference type="PIRSF" id="PIRSF002134">
    <property type="entry name" value="Ribosomal_S13"/>
    <property type="match status" value="1"/>
</dbReference>
<dbReference type="SUPFAM" id="SSF46946">
    <property type="entry name" value="S13-like H2TH domain"/>
    <property type="match status" value="1"/>
</dbReference>
<dbReference type="PROSITE" id="PS00646">
    <property type="entry name" value="RIBOSOMAL_S13_1"/>
    <property type="match status" value="1"/>
</dbReference>
<dbReference type="PROSITE" id="PS50159">
    <property type="entry name" value="RIBOSOMAL_S13_2"/>
    <property type="match status" value="1"/>
</dbReference>
<comment type="function">
    <text evidence="1">Located at the top of the head of the 30S subunit, it contacts several helices of the 16S rRNA. In the 70S ribosome it contacts the 23S rRNA (bridge B1a) and protein L5 of the 50S subunit (bridge B1b), connecting the 2 subunits; these bridges are implicated in subunit movement. Contacts the tRNAs in the A and P-sites.</text>
</comment>
<comment type="subunit">
    <text evidence="1">Part of the 30S ribosomal subunit. Forms a loose heterodimer with protein S19. Forms two bridges to the 50S subunit in the 70S ribosome.</text>
</comment>
<comment type="similarity">
    <text evidence="1">Belongs to the universal ribosomal protein uS13 family.</text>
</comment>